<sequence length="383" mass="39620">MSVTAAQGFTASGIAAGIKENGNPDLALVVNNGPRLAAAGVFTSNRVKAAPVLWSEQVLKGGVVSAVVLNSGGANACTGPKGFQDTHATAEKVAETLDLNAGEVAVASTGLIGVLLPMDKLLPGVERAVAGLSEHGGEKAAIAIKTTDTVHKTSVVTKDGWTVGGMAKGAGMLAPGLATMLVVLTTDADLDRDALDRALRAATRTTFDRVDSDGCMSTNDTVLLLASGASEVTPKQEEFAEAVRAVCDDLGQQLIQDAEGASKDIKVEVVGAATEDDAVEVGRSIARNNLLKCAIHGEDPNWGRVLSAIGTTRAAFEPDQLNVAINGVWVCKKGGVGEDRDLVDMRYREVHIVADLAAGTETATIWTNDLTADYVHENSAYSS</sequence>
<proteinExistence type="inferred from homology"/>
<comment type="function">
    <text evidence="1">Catalyzes two activities which are involved in the cyclic version of arginine biosynthesis: the synthesis of N-acetylglutamate from glutamate and acetyl-CoA as the acetyl donor, and of ornithine by transacetylation between N(2)-acetylornithine and glutamate.</text>
</comment>
<comment type="catalytic activity">
    <reaction evidence="1">
        <text>N(2)-acetyl-L-ornithine + L-glutamate = N-acetyl-L-glutamate + L-ornithine</text>
        <dbReference type="Rhea" id="RHEA:15349"/>
        <dbReference type="ChEBI" id="CHEBI:29985"/>
        <dbReference type="ChEBI" id="CHEBI:44337"/>
        <dbReference type="ChEBI" id="CHEBI:46911"/>
        <dbReference type="ChEBI" id="CHEBI:57805"/>
        <dbReference type="EC" id="2.3.1.35"/>
    </reaction>
</comment>
<comment type="catalytic activity">
    <reaction evidence="1">
        <text>L-glutamate + acetyl-CoA = N-acetyl-L-glutamate + CoA + H(+)</text>
        <dbReference type="Rhea" id="RHEA:24292"/>
        <dbReference type="ChEBI" id="CHEBI:15378"/>
        <dbReference type="ChEBI" id="CHEBI:29985"/>
        <dbReference type="ChEBI" id="CHEBI:44337"/>
        <dbReference type="ChEBI" id="CHEBI:57287"/>
        <dbReference type="ChEBI" id="CHEBI:57288"/>
        <dbReference type="EC" id="2.3.1.1"/>
    </reaction>
</comment>
<comment type="pathway">
    <text evidence="1">Amino-acid biosynthesis; L-arginine biosynthesis; L-ornithine and N-acetyl-L-glutamate from L-glutamate and N(2)-acetyl-L-ornithine (cyclic): step 1/1.</text>
</comment>
<comment type="pathway">
    <text evidence="1">Amino-acid biosynthesis; L-arginine biosynthesis; N(2)-acetyl-L-ornithine from L-glutamate: step 1/4.</text>
</comment>
<comment type="subunit">
    <text evidence="1">Heterotetramer of two alpha and two beta chains.</text>
</comment>
<comment type="subcellular location">
    <subcellularLocation>
        <location evidence="1">Cytoplasm</location>
    </subcellularLocation>
</comment>
<comment type="similarity">
    <text evidence="1">Belongs to the ArgJ family.</text>
</comment>
<feature type="chain" id="PRO_0000002243" description="Arginine biosynthesis bifunctional protein ArgJ alpha chain" evidence="1">
    <location>
        <begin position="1"/>
        <end position="178"/>
    </location>
</feature>
<feature type="chain" id="PRO_0000002244" description="Arginine biosynthesis bifunctional protein ArgJ beta chain" evidence="1">
    <location>
        <begin position="179"/>
        <end position="383"/>
    </location>
</feature>
<feature type="active site" description="Nucleophile" evidence="1">
    <location>
        <position position="179"/>
    </location>
</feature>
<feature type="binding site" evidence="1">
    <location>
        <position position="146"/>
    </location>
    <ligand>
        <name>substrate</name>
    </ligand>
</feature>
<feature type="binding site" evidence="1">
    <location>
        <position position="168"/>
    </location>
    <ligand>
        <name>substrate</name>
    </ligand>
</feature>
<feature type="binding site" evidence="1">
    <location>
        <position position="179"/>
    </location>
    <ligand>
        <name>substrate</name>
    </ligand>
</feature>
<feature type="binding site" evidence="1">
    <location>
        <position position="259"/>
    </location>
    <ligand>
        <name>substrate</name>
    </ligand>
</feature>
<feature type="binding site" evidence="1">
    <location>
        <position position="378"/>
    </location>
    <ligand>
        <name>substrate</name>
    </ligand>
</feature>
<feature type="binding site" evidence="1">
    <location>
        <position position="383"/>
    </location>
    <ligand>
        <name>substrate</name>
    </ligand>
</feature>
<feature type="site" description="Involved in the stabilization of negative charge on the oxyanion by the formation of the oxyanion hole" evidence="1">
    <location>
        <position position="109"/>
    </location>
</feature>
<feature type="site" description="Involved in the stabilization of negative charge on the oxyanion by the formation of the oxyanion hole" evidence="1">
    <location>
        <position position="110"/>
    </location>
</feature>
<feature type="site" description="Cleavage; by autolysis" evidence="1">
    <location>
        <begin position="178"/>
        <end position="179"/>
    </location>
</feature>
<organism>
    <name type="scientific">Streptomyces avermitilis (strain ATCC 31267 / DSM 46492 / JCM 5070 / NBRC 14893 / NCIMB 12804 / NRRL 8165 / MA-4680)</name>
    <dbReference type="NCBI Taxonomy" id="227882"/>
    <lineage>
        <taxon>Bacteria</taxon>
        <taxon>Bacillati</taxon>
        <taxon>Actinomycetota</taxon>
        <taxon>Actinomycetes</taxon>
        <taxon>Kitasatosporales</taxon>
        <taxon>Streptomycetaceae</taxon>
        <taxon>Streptomyces</taxon>
    </lineage>
</organism>
<accession>Q828A5</accession>
<gene>
    <name evidence="1" type="primary">argJ</name>
    <name type="ordered locus">SAV_6764</name>
</gene>
<protein>
    <recommendedName>
        <fullName evidence="1">Arginine biosynthesis bifunctional protein ArgJ</fullName>
    </recommendedName>
    <domain>
        <recommendedName>
            <fullName evidence="1">Glutamate N-acetyltransferase</fullName>
            <ecNumber evidence="1">2.3.1.35</ecNumber>
        </recommendedName>
        <alternativeName>
            <fullName evidence="1">Ornithine acetyltransferase</fullName>
            <shortName evidence="1">OATase</shortName>
        </alternativeName>
        <alternativeName>
            <fullName evidence="1">Ornithine transacetylase</fullName>
        </alternativeName>
    </domain>
    <domain>
        <recommendedName>
            <fullName evidence="1">Amino-acid acetyltransferase</fullName>
            <ecNumber evidence="1">2.3.1.1</ecNumber>
        </recommendedName>
        <alternativeName>
            <fullName evidence="1">N-acetylglutamate synthase</fullName>
            <shortName evidence="1">AGSase</shortName>
        </alternativeName>
    </domain>
    <component>
        <recommendedName>
            <fullName evidence="1">Arginine biosynthesis bifunctional protein ArgJ alpha chain</fullName>
        </recommendedName>
    </component>
    <component>
        <recommendedName>
            <fullName evidence="1">Arginine biosynthesis bifunctional protein ArgJ beta chain</fullName>
        </recommendedName>
    </component>
</protein>
<name>ARGJ_STRAW</name>
<reference key="1">
    <citation type="journal article" date="2001" name="Proc. Natl. Acad. Sci. U.S.A.">
        <title>Genome sequence of an industrial microorganism Streptomyces avermitilis: deducing the ability of producing secondary metabolites.</title>
        <authorList>
            <person name="Omura S."/>
            <person name="Ikeda H."/>
            <person name="Ishikawa J."/>
            <person name="Hanamoto A."/>
            <person name="Takahashi C."/>
            <person name="Shinose M."/>
            <person name="Takahashi Y."/>
            <person name="Horikawa H."/>
            <person name="Nakazawa H."/>
            <person name="Osonoe T."/>
            <person name="Kikuchi H."/>
            <person name="Shiba T."/>
            <person name="Sakaki Y."/>
            <person name="Hattori M."/>
        </authorList>
    </citation>
    <scope>NUCLEOTIDE SEQUENCE [LARGE SCALE GENOMIC DNA]</scope>
    <source>
        <strain>ATCC 31267 / DSM 46492 / JCM 5070 / NBRC 14893 / NCIMB 12804 / NRRL 8165 / MA-4680</strain>
    </source>
</reference>
<reference key="2">
    <citation type="journal article" date="2003" name="Nat. Biotechnol.">
        <title>Complete genome sequence and comparative analysis of the industrial microorganism Streptomyces avermitilis.</title>
        <authorList>
            <person name="Ikeda H."/>
            <person name="Ishikawa J."/>
            <person name="Hanamoto A."/>
            <person name="Shinose M."/>
            <person name="Kikuchi H."/>
            <person name="Shiba T."/>
            <person name="Sakaki Y."/>
            <person name="Hattori M."/>
            <person name="Omura S."/>
        </authorList>
    </citation>
    <scope>NUCLEOTIDE SEQUENCE [LARGE SCALE GENOMIC DNA]</scope>
    <source>
        <strain>ATCC 31267 / DSM 46492 / JCM 5070 / NBRC 14893 / NCIMB 12804 / NRRL 8165 / MA-4680</strain>
    </source>
</reference>
<keyword id="KW-0012">Acyltransferase</keyword>
<keyword id="KW-0028">Amino-acid biosynthesis</keyword>
<keyword id="KW-0055">Arginine biosynthesis</keyword>
<keyword id="KW-0068">Autocatalytic cleavage</keyword>
<keyword id="KW-0963">Cytoplasm</keyword>
<keyword id="KW-0511">Multifunctional enzyme</keyword>
<keyword id="KW-1185">Reference proteome</keyword>
<keyword id="KW-0808">Transferase</keyword>
<dbReference type="EC" id="2.3.1.35" evidence="1"/>
<dbReference type="EC" id="2.3.1.1" evidence="1"/>
<dbReference type="EMBL" id="BA000030">
    <property type="protein sequence ID" value="BAC74475.1"/>
    <property type="molecule type" value="Genomic_DNA"/>
</dbReference>
<dbReference type="RefSeq" id="WP_010988163.1">
    <property type="nucleotide sequence ID" value="NZ_JZJK01000082.1"/>
</dbReference>
<dbReference type="SMR" id="Q828A5"/>
<dbReference type="GeneID" id="41543832"/>
<dbReference type="KEGG" id="sma:SAVERM_6764"/>
<dbReference type="eggNOG" id="COG1364">
    <property type="taxonomic scope" value="Bacteria"/>
</dbReference>
<dbReference type="HOGENOM" id="CLU_027172_2_0_11"/>
<dbReference type="OrthoDB" id="9804242at2"/>
<dbReference type="UniPathway" id="UPA00068">
    <property type="reaction ID" value="UER00106"/>
</dbReference>
<dbReference type="UniPathway" id="UPA00068">
    <property type="reaction ID" value="UER00111"/>
</dbReference>
<dbReference type="Proteomes" id="UP000000428">
    <property type="component" value="Chromosome"/>
</dbReference>
<dbReference type="GO" id="GO:0005737">
    <property type="term" value="C:cytoplasm"/>
    <property type="evidence" value="ECO:0007669"/>
    <property type="project" value="UniProtKB-SubCell"/>
</dbReference>
<dbReference type="GO" id="GO:0004358">
    <property type="term" value="F:glutamate N-acetyltransferase activity"/>
    <property type="evidence" value="ECO:0007669"/>
    <property type="project" value="UniProtKB-UniRule"/>
</dbReference>
<dbReference type="GO" id="GO:0004042">
    <property type="term" value="F:L-glutamate N-acetyltransferase activity"/>
    <property type="evidence" value="ECO:0007669"/>
    <property type="project" value="UniProtKB-UniRule"/>
</dbReference>
<dbReference type="GO" id="GO:0006526">
    <property type="term" value="P:L-arginine biosynthetic process"/>
    <property type="evidence" value="ECO:0007669"/>
    <property type="project" value="UniProtKB-UniRule"/>
</dbReference>
<dbReference type="GO" id="GO:0006592">
    <property type="term" value="P:ornithine biosynthetic process"/>
    <property type="evidence" value="ECO:0007669"/>
    <property type="project" value="TreeGrafter"/>
</dbReference>
<dbReference type="CDD" id="cd02152">
    <property type="entry name" value="OAT"/>
    <property type="match status" value="1"/>
</dbReference>
<dbReference type="FunFam" id="3.10.20.340:FF:000003">
    <property type="entry name" value="Arginine biosynthesis bifunctional protein ArgJ"/>
    <property type="match status" value="1"/>
</dbReference>
<dbReference type="Gene3D" id="3.10.20.340">
    <property type="entry name" value="ArgJ beta chain, C-terminal domain"/>
    <property type="match status" value="1"/>
</dbReference>
<dbReference type="Gene3D" id="3.60.70.12">
    <property type="entry name" value="L-amino peptidase D-ALA esterase/amidase"/>
    <property type="match status" value="1"/>
</dbReference>
<dbReference type="HAMAP" id="MF_01106">
    <property type="entry name" value="ArgJ"/>
    <property type="match status" value="1"/>
</dbReference>
<dbReference type="InterPro" id="IPR002813">
    <property type="entry name" value="Arg_biosynth_ArgJ"/>
</dbReference>
<dbReference type="InterPro" id="IPR016117">
    <property type="entry name" value="ArgJ-like_dom_sf"/>
</dbReference>
<dbReference type="InterPro" id="IPR042195">
    <property type="entry name" value="ArgJ_beta_C"/>
</dbReference>
<dbReference type="NCBIfam" id="TIGR00120">
    <property type="entry name" value="ArgJ"/>
    <property type="match status" value="1"/>
</dbReference>
<dbReference type="NCBIfam" id="NF003802">
    <property type="entry name" value="PRK05388.1"/>
    <property type="match status" value="1"/>
</dbReference>
<dbReference type="PANTHER" id="PTHR23100">
    <property type="entry name" value="ARGININE BIOSYNTHESIS BIFUNCTIONAL PROTEIN ARGJ"/>
    <property type="match status" value="1"/>
</dbReference>
<dbReference type="PANTHER" id="PTHR23100:SF0">
    <property type="entry name" value="ARGININE BIOSYNTHESIS BIFUNCTIONAL PROTEIN ARGJ, MITOCHONDRIAL"/>
    <property type="match status" value="1"/>
</dbReference>
<dbReference type="Pfam" id="PF01960">
    <property type="entry name" value="ArgJ"/>
    <property type="match status" value="1"/>
</dbReference>
<dbReference type="SUPFAM" id="SSF56266">
    <property type="entry name" value="DmpA/ArgJ-like"/>
    <property type="match status" value="1"/>
</dbReference>
<evidence type="ECO:0000255" key="1">
    <source>
        <dbReference type="HAMAP-Rule" id="MF_01106"/>
    </source>
</evidence>